<reference key="1">
    <citation type="submission" date="2009-01" db="EMBL/GenBank/DDBJ databases">
        <title>Complete sequence of Anaeromyxobacter dehalogenans 2CP-1.</title>
        <authorList>
            <person name="Lucas S."/>
            <person name="Copeland A."/>
            <person name="Lapidus A."/>
            <person name="Glavina del Rio T."/>
            <person name="Dalin E."/>
            <person name="Tice H."/>
            <person name="Bruce D."/>
            <person name="Goodwin L."/>
            <person name="Pitluck S."/>
            <person name="Saunders E."/>
            <person name="Brettin T."/>
            <person name="Detter J.C."/>
            <person name="Han C."/>
            <person name="Larimer F."/>
            <person name="Land M."/>
            <person name="Hauser L."/>
            <person name="Kyrpides N."/>
            <person name="Ovchinnikova G."/>
            <person name="Beliaev A.S."/>
            <person name="Richardson P."/>
        </authorList>
    </citation>
    <scope>NUCLEOTIDE SEQUENCE [LARGE SCALE GENOMIC DNA]</scope>
    <source>
        <strain>2CP-1 / ATCC BAA-258</strain>
    </source>
</reference>
<dbReference type="EMBL" id="CP001359">
    <property type="protein sequence ID" value="ACL64574.1"/>
    <property type="molecule type" value="Genomic_DNA"/>
</dbReference>
<dbReference type="RefSeq" id="WP_012632556.1">
    <property type="nucleotide sequence ID" value="NC_011891.1"/>
</dbReference>
<dbReference type="SMR" id="B8JFY6"/>
<dbReference type="KEGG" id="acp:A2cp1_1230"/>
<dbReference type="HOGENOM" id="CLU_006301_9_3_7"/>
<dbReference type="Proteomes" id="UP000007089">
    <property type="component" value="Chromosome"/>
</dbReference>
<dbReference type="GO" id="GO:0005829">
    <property type="term" value="C:cytosol"/>
    <property type="evidence" value="ECO:0007669"/>
    <property type="project" value="TreeGrafter"/>
</dbReference>
<dbReference type="GO" id="GO:0005525">
    <property type="term" value="F:GTP binding"/>
    <property type="evidence" value="ECO:0007669"/>
    <property type="project" value="UniProtKB-KW"/>
</dbReference>
<dbReference type="GO" id="GO:0003924">
    <property type="term" value="F:GTPase activity"/>
    <property type="evidence" value="ECO:0007669"/>
    <property type="project" value="UniProtKB-UniRule"/>
</dbReference>
<dbReference type="GO" id="GO:0003743">
    <property type="term" value="F:translation initiation factor activity"/>
    <property type="evidence" value="ECO:0007669"/>
    <property type="project" value="UniProtKB-UniRule"/>
</dbReference>
<dbReference type="CDD" id="cd01887">
    <property type="entry name" value="IF2_eIF5B"/>
    <property type="match status" value="1"/>
</dbReference>
<dbReference type="CDD" id="cd03702">
    <property type="entry name" value="IF2_mtIF2_II"/>
    <property type="match status" value="1"/>
</dbReference>
<dbReference type="CDD" id="cd03692">
    <property type="entry name" value="mtIF2_IVc"/>
    <property type="match status" value="1"/>
</dbReference>
<dbReference type="FunFam" id="2.40.30.10:FF:000007">
    <property type="entry name" value="Translation initiation factor IF-2"/>
    <property type="match status" value="1"/>
</dbReference>
<dbReference type="FunFam" id="2.40.30.10:FF:000008">
    <property type="entry name" value="Translation initiation factor IF-2"/>
    <property type="match status" value="1"/>
</dbReference>
<dbReference type="FunFam" id="3.40.50.10050:FF:000001">
    <property type="entry name" value="Translation initiation factor IF-2"/>
    <property type="match status" value="1"/>
</dbReference>
<dbReference type="FunFam" id="3.40.50.300:FF:000019">
    <property type="entry name" value="Translation initiation factor IF-2"/>
    <property type="match status" value="1"/>
</dbReference>
<dbReference type="Gene3D" id="1.10.10.2480">
    <property type="match status" value="1"/>
</dbReference>
<dbReference type="Gene3D" id="3.40.50.300">
    <property type="entry name" value="P-loop containing nucleotide triphosphate hydrolases"/>
    <property type="match status" value="1"/>
</dbReference>
<dbReference type="Gene3D" id="2.40.30.10">
    <property type="entry name" value="Translation factors"/>
    <property type="match status" value="2"/>
</dbReference>
<dbReference type="Gene3D" id="3.40.50.10050">
    <property type="entry name" value="Translation initiation factor IF- 2, domain 3"/>
    <property type="match status" value="1"/>
</dbReference>
<dbReference type="HAMAP" id="MF_00100_B">
    <property type="entry name" value="IF_2_B"/>
    <property type="match status" value="1"/>
</dbReference>
<dbReference type="InterPro" id="IPR053905">
    <property type="entry name" value="EF-G-like_DII"/>
</dbReference>
<dbReference type="InterPro" id="IPR044145">
    <property type="entry name" value="IF2_II"/>
</dbReference>
<dbReference type="InterPro" id="IPR006847">
    <property type="entry name" value="IF2_N"/>
</dbReference>
<dbReference type="InterPro" id="IPR027417">
    <property type="entry name" value="P-loop_NTPase"/>
</dbReference>
<dbReference type="InterPro" id="IPR005225">
    <property type="entry name" value="Small_GTP-bd"/>
</dbReference>
<dbReference type="InterPro" id="IPR000795">
    <property type="entry name" value="T_Tr_GTP-bd_dom"/>
</dbReference>
<dbReference type="InterPro" id="IPR000178">
    <property type="entry name" value="TF_IF2_bacterial-like"/>
</dbReference>
<dbReference type="InterPro" id="IPR015760">
    <property type="entry name" value="TIF_IF2"/>
</dbReference>
<dbReference type="InterPro" id="IPR023115">
    <property type="entry name" value="TIF_IF2_dom3"/>
</dbReference>
<dbReference type="InterPro" id="IPR036925">
    <property type="entry name" value="TIF_IF2_dom3_sf"/>
</dbReference>
<dbReference type="InterPro" id="IPR009000">
    <property type="entry name" value="Transl_B-barrel_sf"/>
</dbReference>
<dbReference type="NCBIfam" id="TIGR00487">
    <property type="entry name" value="IF-2"/>
    <property type="match status" value="1"/>
</dbReference>
<dbReference type="NCBIfam" id="TIGR00231">
    <property type="entry name" value="small_GTP"/>
    <property type="match status" value="1"/>
</dbReference>
<dbReference type="PANTHER" id="PTHR43381:SF5">
    <property type="entry name" value="TR-TYPE G DOMAIN-CONTAINING PROTEIN"/>
    <property type="match status" value="1"/>
</dbReference>
<dbReference type="PANTHER" id="PTHR43381">
    <property type="entry name" value="TRANSLATION INITIATION FACTOR IF-2-RELATED"/>
    <property type="match status" value="1"/>
</dbReference>
<dbReference type="Pfam" id="PF22042">
    <property type="entry name" value="EF-G_D2"/>
    <property type="match status" value="1"/>
</dbReference>
<dbReference type="Pfam" id="PF00009">
    <property type="entry name" value="GTP_EFTU"/>
    <property type="match status" value="1"/>
</dbReference>
<dbReference type="Pfam" id="PF11987">
    <property type="entry name" value="IF-2"/>
    <property type="match status" value="1"/>
</dbReference>
<dbReference type="Pfam" id="PF04760">
    <property type="entry name" value="IF2_N"/>
    <property type="match status" value="1"/>
</dbReference>
<dbReference type="PRINTS" id="PR01217">
    <property type="entry name" value="PRICHEXTENSN"/>
</dbReference>
<dbReference type="SUPFAM" id="SSF52156">
    <property type="entry name" value="Initiation factor IF2/eIF5b, domain 3"/>
    <property type="match status" value="1"/>
</dbReference>
<dbReference type="SUPFAM" id="SSF52540">
    <property type="entry name" value="P-loop containing nucleoside triphosphate hydrolases"/>
    <property type="match status" value="1"/>
</dbReference>
<dbReference type="SUPFAM" id="SSF50447">
    <property type="entry name" value="Translation proteins"/>
    <property type="match status" value="2"/>
</dbReference>
<dbReference type="PROSITE" id="PS51722">
    <property type="entry name" value="G_TR_2"/>
    <property type="match status" value="1"/>
</dbReference>
<dbReference type="PROSITE" id="PS01176">
    <property type="entry name" value="IF2"/>
    <property type="match status" value="1"/>
</dbReference>
<accession>B8JFY6</accession>
<name>IF2_ANAD2</name>
<organism>
    <name type="scientific">Anaeromyxobacter dehalogenans (strain 2CP-1 / ATCC BAA-258)</name>
    <dbReference type="NCBI Taxonomy" id="455488"/>
    <lineage>
        <taxon>Bacteria</taxon>
        <taxon>Pseudomonadati</taxon>
        <taxon>Myxococcota</taxon>
        <taxon>Myxococcia</taxon>
        <taxon>Myxococcales</taxon>
        <taxon>Cystobacterineae</taxon>
        <taxon>Anaeromyxobacteraceae</taxon>
        <taxon>Anaeromyxobacter</taxon>
    </lineage>
</organism>
<comment type="function">
    <text evidence="2">One of the essential components for the initiation of protein synthesis. Protects formylmethionyl-tRNA from spontaneous hydrolysis and promotes its binding to the 30S ribosomal subunits. Also involved in the hydrolysis of GTP during the formation of the 70S ribosomal complex.</text>
</comment>
<comment type="subcellular location">
    <subcellularLocation>
        <location evidence="2">Cytoplasm</location>
    </subcellularLocation>
</comment>
<comment type="similarity">
    <text evidence="2">Belongs to the TRAFAC class translation factor GTPase superfamily. Classic translation factor GTPase family. IF-2 subfamily.</text>
</comment>
<gene>
    <name evidence="2" type="primary">infB</name>
    <name type="ordered locus">A2cp1_1230</name>
</gene>
<protein>
    <recommendedName>
        <fullName evidence="2">Translation initiation factor IF-2</fullName>
    </recommendedName>
</protein>
<sequence>MSKKRVHELGKQLKEQGIELSNQELVEKLHALGYLEVKSHSSSLEDDQAHAAYEKILAERKPKPAPVRPSGPGFVVRKRAHVEPPTVTAPAAPPPAEPEYAEPQYAEPQQAEQAYEPEPQEAQPEAAPEPVAAPEQPAEAAPLAAQAAPSPGAEAAAPAAPQAQPAQPAAPVAPPAPSAQPSAPQPPAAQPRPPQPPMPSRPPPAGYRPAPPPGARPPMSAAPGAPAQPGAAGQPPRPPVDPRTLRPTSTQAVVISRPLVPVRRVTPPTSARQQFPVAPGPRALGEVRELKVVPGSLGREREFIDVSRDKRRGRQPGRPISEEQAKSLSGKELLQAAISDRAYIPIRGKKKKPTKKGAKTQITEKAEHKKVIRIEESISVSELSQVMGVKASDLIRKLMQMGKMVTINAQIDADTAAILALEHGYTVEKKGFEVEEFIPEVEVDESKLVIRPPVVTVMGHVDHGKTSLLDAIRQADVAAGEAGGITQHIGAYSVNTPQGPITFLDTPGHEAFTAMRQRGAQVTDLVVLVVAADDGVMPQTVESIKAAKAAGVTILVAINKVDKPQAAPERVMQQLTEYELVAEQWGGTTIMLPVSARTKQGIPELLEYIALQSEVLELKANPDKLAAGRVIEAKLEKGRGPVATVLVEEGTLRVGDALVTGVHFGRVRAMMNERGEQVDNVGPGYPVEVLGLSGVPVAGDEFDVVEDEKAAKEVAQHRATKQRQKELGGVKKATLEDLFAKAKTSGQKVLNLVVKADVQGSSEAVSQALEKAATKKVGVKILESAVGAITKSDVLTAAAGNAVIVGFNTKPESEIENIASQQGVKILMFGIIYEAVDRIREEMAGLLEPIIKEKPLGKAEVRQVFNIPRVGQIAGSAVTEGVVKRAGHVRVVRDRKVIFTGKIGSLKRVKDDVREVAQGFECGIGVDGFSDVKQGDILEVYELEEIRPSLD</sequence>
<feature type="chain" id="PRO_1000118744" description="Translation initiation factor IF-2">
    <location>
        <begin position="1"/>
        <end position="951"/>
    </location>
</feature>
<feature type="domain" description="tr-type G">
    <location>
        <begin position="450"/>
        <end position="619"/>
    </location>
</feature>
<feature type="region of interest" description="Disordered" evidence="3">
    <location>
        <begin position="58"/>
        <end position="255"/>
    </location>
</feature>
<feature type="region of interest" description="Disordered" evidence="3">
    <location>
        <begin position="305"/>
        <end position="329"/>
    </location>
</feature>
<feature type="region of interest" description="G1" evidence="1">
    <location>
        <begin position="459"/>
        <end position="466"/>
    </location>
</feature>
<feature type="region of interest" description="G2" evidence="1">
    <location>
        <begin position="484"/>
        <end position="488"/>
    </location>
</feature>
<feature type="region of interest" description="G3" evidence="1">
    <location>
        <begin position="505"/>
        <end position="508"/>
    </location>
</feature>
<feature type="region of interest" description="G4" evidence="1">
    <location>
        <begin position="559"/>
        <end position="562"/>
    </location>
</feature>
<feature type="region of interest" description="G5" evidence="1">
    <location>
        <begin position="595"/>
        <end position="597"/>
    </location>
</feature>
<feature type="compositionally biased region" description="Low complexity" evidence="3">
    <location>
        <begin position="101"/>
        <end position="170"/>
    </location>
</feature>
<feature type="compositionally biased region" description="Pro residues" evidence="3">
    <location>
        <begin position="171"/>
        <end position="216"/>
    </location>
</feature>
<feature type="compositionally biased region" description="Low complexity" evidence="3">
    <location>
        <begin position="217"/>
        <end position="234"/>
    </location>
</feature>
<feature type="binding site" evidence="2">
    <location>
        <begin position="459"/>
        <end position="466"/>
    </location>
    <ligand>
        <name>GTP</name>
        <dbReference type="ChEBI" id="CHEBI:37565"/>
    </ligand>
</feature>
<feature type="binding site" evidence="2">
    <location>
        <begin position="505"/>
        <end position="509"/>
    </location>
    <ligand>
        <name>GTP</name>
        <dbReference type="ChEBI" id="CHEBI:37565"/>
    </ligand>
</feature>
<feature type="binding site" evidence="2">
    <location>
        <begin position="559"/>
        <end position="562"/>
    </location>
    <ligand>
        <name>GTP</name>
        <dbReference type="ChEBI" id="CHEBI:37565"/>
    </ligand>
</feature>
<evidence type="ECO:0000250" key="1"/>
<evidence type="ECO:0000255" key="2">
    <source>
        <dbReference type="HAMAP-Rule" id="MF_00100"/>
    </source>
</evidence>
<evidence type="ECO:0000256" key="3">
    <source>
        <dbReference type="SAM" id="MobiDB-lite"/>
    </source>
</evidence>
<keyword id="KW-0963">Cytoplasm</keyword>
<keyword id="KW-0342">GTP-binding</keyword>
<keyword id="KW-0396">Initiation factor</keyword>
<keyword id="KW-0547">Nucleotide-binding</keyword>
<keyword id="KW-0648">Protein biosynthesis</keyword>
<proteinExistence type="inferred from homology"/>